<reference key="1">
    <citation type="journal article" date="2006" name="Science">
        <title>Genome of rice cluster I archaea -- the key methane producers in the rice rhizosphere.</title>
        <authorList>
            <person name="Erkel C."/>
            <person name="Kube M."/>
            <person name="Reinhardt R."/>
            <person name="Liesack W."/>
        </authorList>
    </citation>
    <scope>NUCLEOTIDE SEQUENCE [LARGE SCALE GENOMIC DNA]</scope>
    <source>
        <strain>DSM 22066 / NBRC 105507 / MRE50</strain>
    </source>
</reference>
<organism>
    <name type="scientific">Methanocella arvoryzae (strain DSM 22066 / NBRC 105507 / MRE50)</name>
    <dbReference type="NCBI Taxonomy" id="351160"/>
    <lineage>
        <taxon>Archaea</taxon>
        <taxon>Methanobacteriati</taxon>
        <taxon>Methanobacteriota</taxon>
        <taxon>Stenosarchaea group</taxon>
        <taxon>Methanomicrobia</taxon>
        <taxon>Methanocellales</taxon>
        <taxon>Methanocellaceae</taxon>
        <taxon>Methanocella</taxon>
    </lineage>
</organism>
<sequence length="113" mass="12379">MHELSIATDLINTALETAKQNNAREVISITVEIGELALINPEQLQFMYQVLTEENLLKGSELIIINVPAVAECQCGYKGPVPDKTTCACPNCGLTMRAVEGRDICLKTMEIEV</sequence>
<comment type="function">
    <text evidence="1">Involved in the maturation of [NiFe] hydrogenases. Required for nickel insertion into the metal center of the hydrogenase.</text>
</comment>
<comment type="similarity">
    <text evidence="1">Belongs to the HypA/HybF family.</text>
</comment>
<dbReference type="EMBL" id="AM114193">
    <property type="protein sequence ID" value="CAJ35944.1"/>
    <property type="molecule type" value="Genomic_DNA"/>
</dbReference>
<dbReference type="RefSeq" id="WP_012036561.1">
    <property type="nucleotide sequence ID" value="NC_009464.1"/>
</dbReference>
<dbReference type="SMR" id="Q0W6P9"/>
<dbReference type="STRING" id="351160.RCIX523"/>
<dbReference type="GeneID" id="5145314"/>
<dbReference type="KEGG" id="rci:RCIX523"/>
<dbReference type="eggNOG" id="arCOG04426">
    <property type="taxonomic scope" value="Archaea"/>
</dbReference>
<dbReference type="OrthoDB" id="36835at2157"/>
<dbReference type="Proteomes" id="UP000000663">
    <property type="component" value="Chromosome"/>
</dbReference>
<dbReference type="GO" id="GO:0016151">
    <property type="term" value="F:nickel cation binding"/>
    <property type="evidence" value="ECO:0007669"/>
    <property type="project" value="UniProtKB-UniRule"/>
</dbReference>
<dbReference type="GO" id="GO:0008270">
    <property type="term" value="F:zinc ion binding"/>
    <property type="evidence" value="ECO:0007669"/>
    <property type="project" value="UniProtKB-UniRule"/>
</dbReference>
<dbReference type="GO" id="GO:0051604">
    <property type="term" value="P:protein maturation"/>
    <property type="evidence" value="ECO:0007669"/>
    <property type="project" value="InterPro"/>
</dbReference>
<dbReference type="GO" id="GO:0036211">
    <property type="term" value="P:protein modification process"/>
    <property type="evidence" value="ECO:0007669"/>
    <property type="project" value="UniProtKB-UniRule"/>
</dbReference>
<dbReference type="Gene3D" id="3.30.2320.80">
    <property type="match status" value="1"/>
</dbReference>
<dbReference type="HAMAP" id="MF_00213">
    <property type="entry name" value="HypA_HybF"/>
    <property type="match status" value="1"/>
</dbReference>
<dbReference type="InterPro" id="IPR000688">
    <property type="entry name" value="HypA/HybF"/>
</dbReference>
<dbReference type="NCBIfam" id="TIGR00100">
    <property type="entry name" value="hypA"/>
    <property type="match status" value="1"/>
</dbReference>
<dbReference type="PANTHER" id="PTHR34535">
    <property type="entry name" value="HYDROGENASE MATURATION FACTOR HYPA"/>
    <property type="match status" value="1"/>
</dbReference>
<dbReference type="PANTHER" id="PTHR34535:SF3">
    <property type="entry name" value="HYDROGENASE MATURATION FACTOR HYPA"/>
    <property type="match status" value="1"/>
</dbReference>
<dbReference type="Pfam" id="PF01155">
    <property type="entry name" value="HypA"/>
    <property type="match status" value="1"/>
</dbReference>
<dbReference type="PIRSF" id="PIRSF004761">
    <property type="entry name" value="Hydrgn_mat_HypA"/>
    <property type="match status" value="1"/>
</dbReference>
<name>HYPA_METAR</name>
<keyword id="KW-0479">Metal-binding</keyword>
<keyword id="KW-0533">Nickel</keyword>
<keyword id="KW-1185">Reference proteome</keyword>
<keyword id="KW-0862">Zinc</keyword>
<evidence type="ECO:0000255" key="1">
    <source>
        <dbReference type="HAMAP-Rule" id="MF_00213"/>
    </source>
</evidence>
<proteinExistence type="inferred from homology"/>
<gene>
    <name evidence="1" type="primary">hypA</name>
    <name type="ordered locus">UNCMA_22410</name>
    <name type="ORF">RCIX523</name>
</gene>
<feature type="chain" id="PRO_1000023864" description="Hydrogenase maturation factor HypA">
    <location>
        <begin position="1"/>
        <end position="113"/>
    </location>
</feature>
<feature type="binding site" evidence="1">
    <location>
        <position position="2"/>
    </location>
    <ligand>
        <name>Ni(2+)</name>
        <dbReference type="ChEBI" id="CHEBI:49786"/>
    </ligand>
</feature>
<feature type="binding site" evidence="1">
    <location>
        <position position="73"/>
    </location>
    <ligand>
        <name>Zn(2+)</name>
        <dbReference type="ChEBI" id="CHEBI:29105"/>
    </ligand>
</feature>
<feature type="binding site" evidence="1">
    <location>
        <position position="75"/>
    </location>
    <ligand>
        <name>Zn(2+)</name>
        <dbReference type="ChEBI" id="CHEBI:29105"/>
    </ligand>
</feature>
<feature type="binding site" evidence="1">
    <location>
        <position position="89"/>
    </location>
    <ligand>
        <name>Zn(2+)</name>
        <dbReference type="ChEBI" id="CHEBI:29105"/>
    </ligand>
</feature>
<feature type="binding site" evidence="1">
    <location>
        <position position="92"/>
    </location>
    <ligand>
        <name>Zn(2+)</name>
        <dbReference type="ChEBI" id="CHEBI:29105"/>
    </ligand>
</feature>
<protein>
    <recommendedName>
        <fullName evidence="1">Hydrogenase maturation factor HypA</fullName>
    </recommendedName>
</protein>
<accession>Q0W6P9</accession>